<protein>
    <recommendedName>
        <fullName>Alkyl hydroperoxide reductase C</fullName>
        <ecNumber>1.11.1.28</ecNumber>
    </recommendedName>
    <alternativeName>
        <fullName>Peroxiredoxin</fullName>
    </alternativeName>
    <alternativeName>
        <fullName>Thioredoxin peroxidase</fullName>
    </alternativeName>
</protein>
<gene>
    <name type="ordered locus">MSMEG_4891</name>
    <name type="ordered locus">MSMEI_4766</name>
</gene>
<proteinExistence type="evidence at protein level"/>
<dbReference type="EC" id="1.11.1.28"/>
<dbReference type="EMBL" id="CP000480">
    <property type="protein sequence ID" value="ABK73669.1"/>
    <property type="molecule type" value="Genomic_DNA"/>
</dbReference>
<dbReference type="EMBL" id="CP001663">
    <property type="protein sequence ID" value="AFP41215.1"/>
    <property type="molecule type" value="Genomic_DNA"/>
</dbReference>
<dbReference type="RefSeq" id="WP_011730169.1">
    <property type="nucleotide sequence ID" value="NZ_SIJM01000024.1"/>
</dbReference>
<dbReference type="RefSeq" id="YP_889147.1">
    <property type="nucleotide sequence ID" value="NC_008596.1"/>
</dbReference>
<dbReference type="SMR" id="A0R1V9"/>
<dbReference type="STRING" id="246196.MSMEG_4891"/>
<dbReference type="PaxDb" id="246196-MSMEI_4766"/>
<dbReference type="KEGG" id="msb:LJ00_24190"/>
<dbReference type="KEGG" id="msg:MSMEI_4766"/>
<dbReference type="KEGG" id="msm:MSMEG_4891"/>
<dbReference type="PATRIC" id="fig|246196.56.peg.4874"/>
<dbReference type="eggNOG" id="COG0450">
    <property type="taxonomic scope" value="Bacteria"/>
</dbReference>
<dbReference type="OrthoDB" id="9812811at2"/>
<dbReference type="Proteomes" id="UP000000757">
    <property type="component" value="Chromosome"/>
</dbReference>
<dbReference type="Proteomes" id="UP000006158">
    <property type="component" value="Chromosome"/>
</dbReference>
<dbReference type="GO" id="GO:0005829">
    <property type="term" value="C:cytosol"/>
    <property type="evidence" value="ECO:0007669"/>
    <property type="project" value="TreeGrafter"/>
</dbReference>
<dbReference type="GO" id="GO:0008379">
    <property type="term" value="F:thioredoxin peroxidase activity"/>
    <property type="evidence" value="ECO:0007669"/>
    <property type="project" value="TreeGrafter"/>
</dbReference>
<dbReference type="GO" id="GO:0045454">
    <property type="term" value="P:cell redox homeostasis"/>
    <property type="evidence" value="ECO:0007669"/>
    <property type="project" value="TreeGrafter"/>
</dbReference>
<dbReference type="GO" id="GO:0033554">
    <property type="term" value="P:cellular response to stress"/>
    <property type="evidence" value="ECO:0007669"/>
    <property type="project" value="TreeGrafter"/>
</dbReference>
<dbReference type="GO" id="GO:0042744">
    <property type="term" value="P:hydrogen peroxide catabolic process"/>
    <property type="evidence" value="ECO:0007669"/>
    <property type="project" value="TreeGrafter"/>
</dbReference>
<dbReference type="GO" id="GO:0006979">
    <property type="term" value="P:response to oxidative stress"/>
    <property type="evidence" value="ECO:0007669"/>
    <property type="project" value="TreeGrafter"/>
</dbReference>
<dbReference type="CDD" id="cd03015">
    <property type="entry name" value="PRX_Typ2cys"/>
    <property type="match status" value="1"/>
</dbReference>
<dbReference type="FunFam" id="3.40.30.10:FF:000043">
    <property type="entry name" value="Alkyl hydroperoxide reductase C"/>
    <property type="match status" value="1"/>
</dbReference>
<dbReference type="Gene3D" id="3.40.30.10">
    <property type="entry name" value="Glutaredoxin"/>
    <property type="match status" value="1"/>
</dbReference>
<dbReference type="InterPro" id="IPR000866">
    <property type="entry name" value="AhpC/TSA"/>
</dbReference>
<dbReference type="InterPro" id="IPR050217">
    <property type="entry name" value="Peroxiredoxin"/>
</dbReference>
<dbReference type="InterPro" id="IPR024706">
    <property type="entry name" value="Peroxiredoxin_AhpC-typ"/>
</dbReference>
<dbReference type="InterPro" id="IPR036249">
    <property type="entry name" value="Thioredoxin-like_sf"/>
</dbReference>
<dbReference type="InterPro" id="IPR013766">
    <property type="entry name" value="Thioredoxin_domain"/>
</dbReference>
<dbReference type="PANTHER" id="PTHR10681:SF121">
    <property type="entry name" value="ALKYL HYDROPEROXIDE REDUCTASE C"/>
    <property type="match status" value="1"/>
</dbReference>
<dbReference type="PANTHER" id="PTHR10681">
    <property type="entry name" value="THIOREDOXIN PEROXIDASE"/>
    <property type="match status" value="1"/>
</dbReference>
<dbReference type="Pfam" id="PF00578">
    <property type="entry name" value="AhpC-TSA"/>
    <property type="match status" value="1"/>
</dbReference>
<dbReference type="PIRSF" id="PIRSF000239">
    <property type="entry name" value="AHPC"/>
    <property type="match status" value="1"/>
</dbReference>
<dbReference type="SUPFAM" id="SSF52833">
    <property type="entry name" value="Thioredoxin-like"/>
    <property type="match status" value="1"/>
</dbReference>
<dbReference type="PROSITE" id="PS51352">
    <property type="entry name" value="THIOREDOXIN_2"/>
    <property type="match status" value="1"/>
</dbReference>
<sequence>MALLTIGDQFPEYDLTAVVGGDLSKVDAKQPDDYFTRVTSKDYEGKWRIIFFWPKDFTFVCPTEIAAFGKLNEDFEDRDAKVLGVSVDNEFVHFQWRAQHEDLKTLPFPMVSDLKRELTAACGVLNADGVADRATFIVDPNNEVQFVSVTAGSVGRNVDEVLRVLDALQSDELCACNWKKGDPTINAGELLAGAV</sequence>
<accession>A0R1V9</accession>
<accession>I7FIL4</accession>
<comment type="function">
    <text evidence="2">Thiol-specific peroxidase that catalyzes the reduction of hydrogen peroxide and organic hydroperoxides to water and alcohols, respectively. Plays a role in cell protection against oxidative stress by detoxifying peroxides. Together with AhpD, DlaT and Lpd, constitutes an NADH-dependent peroxidase active against hydrogen and alkyl peroxides as well as serving as a peroxynitrite reductase, thus protecting the bacterium against reactive nitrogen intermediates and oxidative stress generated by the host immune system. Does not however seem to play a role in detoxification of isoniazid.</text>
</comment>
<comment type="catalytic activity">
    <reaction evidence="2">
        <text>N(6)-[(R)-dihydrolipoyl]-L-lysyl-[lipoyl-carrier protein] + a hydroperoxide = N(6)-[(R)-lipoyl]-L-lysyl-[lipoyl-carrier protein] + an alcohol + H2O</text>
        <dbReference type="Rhea" id="RHEA:62636"/>
        <dbReference type="Rhea" id="RHEA-COMP:10502"/>
        <dbReference type="Rhea" id="RHEA-COMP:16355"/>
        <dbReference type="ChEBI" id="CHEBI:15377"/>
        <dbReference type="ChEBI" id="CHEBI:30879"/>
        <dbReference type="ChEBI" id="CHEBI:35924"/>
        <dbReference type="ChEBI" id="CHEBI:83099"/>
        <dbReference type="ChEBI" id="CHEBI:83100"/>
        <dbReference type="EC" id="1.11.1.28"/>
    </reaction>
</comment>
<comment type="subunit">
    <text evidence="2">Homodimer; disulfide-linked, upon oxidation. 6 homodimers assemble to form a ring-like dodecamer. Identified in a complex with AhpD, DlaT and Lpd.</text>
</comment>
<comment type="subcellular location">
    <subcellularLocation>
        <location evidence="1">Cytoplasm</location>
    </subcellularLocation>
</comment>
<comment type="miscellaneous">
    <text evidence="2">The active site is a conserved redox-active cysteine residue, the peroxidatic cysteine (C(P)), which makes the nucleophilic attack on the peroxide substrate. The peroxide oxidizes the C(P)-SH to cysteine sulfenic acid (C(P)-SOH), which then reacts with another cysteine residue, the resolving cysteine (C(R)), to form a disulfide bridge. The disulfide is subsequently reduced by an appropriate electron donor to complete the catalytic cycle. In this typical 2-Cys peroxiredoxin, C(R) is provided by the other dimeric subunit to form an intersubunit disulfide. The disulfide can subsequently be reduced through a mixed disulfide with the C-terminal cysteine of AhpD, resolved by its second cysteine or by thioredoxin (TrxC).</text>
</comment>
<comment type="similarity">
    <text evidence="5">Belongs to the peroxiredoxin family. AhpC/Prx1 subfamily.</text>
</comment>
<organism>
    <name type="scientific">Mycolicibacterium smegmatis (strain ATCC 700084 / mc(2)155)</name>
    <name type="common">Mycobacterium smegmatis</name>
    <dbReference type="NCBI Taxonomy" id="246196"/>
    <lineage>
        <taxon>Bacteria</taxon>
        <taxon>Bacillati</taxon>
        <taxon>Actinomycetota</taxon>
        <taxon>Actinomycetes</taxon>
        <taxon>Mycobacteriales</taxon>
        <taxon>Mycobacteriaceae</taxon>
        <taxon>Mycolicibacterium</taxon>
    </lineage>
</organism>
<evidence type="ECO:0000250" key="1">
    <source>
        <dbReference type="UniProtKB" id="P0AE08"/>
    </source>
</evidence>
<evidence type="ECO:0000250" key="2">
    <source>
        <dbReference type="UniProtKB" id="P9WQB7"/>
    </source>
</evidence>
<evidence type="ECO:0000255" key="3">
    <source>
        <dbReference type="PROSITE-ProRule" id="PRU00691"/>
    </source>
</evidence>
<evidence type="ECO:0000269" key="4">
    <source>
    </source>
</evidence>
<evidence type="ECO:0000305" key="5"/>
<feature type="chain" id="PRO_0000396111" description="Alkyl hydroperoxide reductase C">
    <location>
        <begin position="1"/>
        <end position="195"/>
    </location>
</feature>
<feature type="domain" description="Thioredoxin" evidence="3">
    <location>
        <begin position="4"/>
        <end position="170"/>
    </location>
</feature>
<feature type="active site" description="Cysteine sulfenic acid (-SOH) intermediate" evidence="2">
    <location>
        <position position="61"/>
    </location>
</feature>
<feature type="disulfide bond" description="Interchain (with C-133 in AhpD); transient" evidence="2">
    <location>
        <position position="61"/>
    </location>
</feature>
<feature type="disulfide bond" description="Interchain (with C-174); in linked form" evidence="2">
    <location>
        <position position="61"/>
    </location>
</feature>
<feature type="disulfide bond" description="Interchain (with C-61); in linked form" evidence="2">
    <location>
        <position position="174"/>
    </location>
</feature>
<feature type="cross-link" description="Isoglutamyl lysine isopeptide (Lys-Gln) (interchain with Q-Cter in protein Pup)" evidence="4">
    <location>
        <position position="41"/>
    </location>
</feature>
<keyword id="KW-0049">Antioxidant</keyword>
<keyword id="KW-0963">Cytoplasm</keyword>
<keyword id="KW-1015">Disulfide bond</keyword>
<keyword id="KW-1017">Isopeptide bond</keyword>
<keyword id="KW-0560">Oxidoreductase</keyword>
<keyword id="KW-0575">Peroxidase</keyword>
<keyword id="KW-0676">Redox-active center</keyword>
<keyword id="KW-1185">Reference proteome</keyword>
<keyword id="KW-0346">Stress response</keyword>
<keyword id="KW-0832">Ubl conjugation</keyword>
<reference key="1">
    <citation type="submission" date="2006-10" db="EMBL/GenBank/DDBJ databases">
        <authorList>
            <person name="Fleischmann R.D."/>
            <person name="Dodson R.J."/>
            <person name="Haft D.H."/>
            <person name="Merkel J.S."/>
            <person name="Nelson W.C."/>
            <person name="Fraser C.M."/>
        </authorList>
    </citation>
    <scope>NUCLEOTIDE SEQUENCE [LARGE SCALE GENOMIC DNA]</scope>
    <source>
        <strain>ATCC 700084 / mc(2)155</strain>
    </source>
</reference>
<reference key="2">
    <citation type="journal article" date="2007" name="Genome Biol.">
        <title>Interrupted coding sequences in Mycobacterium smegmatis: authentic mutations or sequencing errors?</title>
        <authorList>
            <person name="Deshayes C."/>
            <person name="Perrodou E."/>
            <person name="Gallien S."/>
            <person name="Euphrasie D."/>
            <person name="Schaeffer C."/>
            <person name="Van-Dorsselaer A."/>
            <person name="Poch O."/>
            <person name="Lecompte O."/>
            <person name="Reyrat J.-M."/>
        </authorList>
    </citation>
    <scope>NUCLEOTIDE SEQUENCE [LARGE SCALE GENOMIC DNA]</scope>
    <source>
        <strain>ATCC 700084 / mc(2)155</strain>
    </source>
</reference>
<reference key="3">
    <citation type="journal article" date="2009" name="Genome Res.">
        <title>Ortho-proteogenomics: multiple proteomes investigation through orthology and a new MS-based protocol.</title>
        <authorList>
            <person name="Gallien S."/>
            <person name="Perrodou E."/>
            <person name="Carapito C."/>
            <person name="Deshayes C."/>
            <person name="Reyrat J.-M."/>
            <person name="Van Dorsselaer A."/>
            <person name="Poch O."/>
            <person name="Schaeffer C."/>
            <person name="Lecompte O."/>
        </authorList>
    </citation>
    <scope>NUCLEOTIDE SEQUENCE [LARGE SCALE GENOMIC DNA]</scope>
    <source>
        <strain>ATCC 700084 / mc(2)155</strain>
    </source>
</reference>
<reference key="4">
    <citation type="journal article" date="2010" name="Mol. Biosyst.">
        <title>Expansion of the mycobacterial 'PUPylome'.</title>
        <authorList>
            <person name="Watrous J."/>
            <person name="Burns K."/>
            <person name="Liu W.T."/>
            <person name="Patel A."/>
            <person name="Hook V."/>
            <person name="Bafna V."/>
            <person name="Barry C.E. III"/>
            <person name="Bark S."/>
            <person name="Dorrestein P.C."/>
        </authorList>
    </citation>
    <scope>PUPYLATION AT LYS-41</scope>
    <scope>IDENTIFICATION BY MASS SPECTROMETRY</scope>
</reference>
<name>AHPC_MYCS2</name>